<gene>
    <name type="primary">IAA26</name>
    <name type="ordered locus">Os09g0527700</name>
    <name type="ordered locus">LOC_Os09g35870</name>
    <name type="ORF">OJ1439_F07.27</name>
    <name evidence="6" type="ORF">OsJ_30083</name>
</gene>
<accession>Q652A1</accession>
<accession>Q0J069</accession>
<name>IAA26_ORYSJ</name>
<comment type="function">
    <text evidence="1">Aux/IAA proteins are short-lived transcriptional factors that function as repressors of early auxin response genes at low auxin concentrations.</text>
</comment>
<comment type="subunit">
    <text evidence="1">Homodimers and heterodimers.</text>
</comment>
<comment type="subcellular location">
    <subcellularLocation>
        <location evidence="1">Nucleus</location>
    </subcellularLocation>
</comment>
<comment type="tissue specificity">
    <text evidence="4">Expressed in roots, seedlings and flowers.</text>
</comment>
<comment type="induction">
    <text evidence="4">Not induced by auxin.</text>
</comment>
<comment type="similarity">
    <text evidence="5">Belongs to the Aux/IAA family.</text>
</comment>
<protein>
    <recommendedName>
        <fullName>Auxin-responsive protein IAA26</fullName>
    </recommendedName>
    <alternativeName>
        <fullName>Indoleacetic acid-induced protein 26</fullName>
    </alternativeName>
</protein>
<keyword id="KW-0927">Auxin signaling pathway</keyword>
<keyword id="KW-0539">Nucleus</keyword>
<keyword id="KW-1185">Reference proteome</keyword>
<keyword id="KW-0678">Repressor</keyword>
<keyword id="KW-0804">Transcription</keyword>
<keyword id="KW-0805">Transcription regulation</keyword>
<reference key="1">
    <citation type="journal article" date="2005" name="Nature">
        <title>The map-based sequence of the rice genome.</title>
        <authorList>
            <consortium name="International rice genome sequencing project (IRGSP)"/>
        </authorList>
    </citation>
    <scope>NUCLEOTIDE SEQUENCE [LARGE SCALE GENOMIC DNA]</scope>
    <source>
        <strain>cv. Nipponbare</strain>
    </source>
</reference>
<reference key="2">
    <citation type="journal article" date="2008" name="Nucleic Acids Res.">
        <title>The rice annotation project database (RAP-DB): 2008 update.</title>
        <authorList>
            <consortium name="The rice annotation project (RAP)"/>
        </authorList>
    </citation>
    <scope>GENOME REANNOTATION</scope>
    <source>
        <strain>cv. Nipponbare</strain>
    </source>
</reference>
<reference key="3">
    <citation type="journal article" date="2013" name="Rice">
        <title>Improvement of the Oryza sativa Nipponbare reference genome using next generation sequence and optical map data.</title>
        <authorList>
            <person name="Kawahara Y."/>
            <person name="de la Bastide M."/>
            <person name="Hamilton J.P."/>
            <person name="Kanamori H."/>
            <person name="McCombie W.R."/>
            <person name="Ouyang S."/>
            <person name="Schwartz D.C."/>
            <person name="Tanaka T."/>
            <person name="Wu J."/>
            <person name="Zhou S."/>
            <person name="Childs K.L."/>
            <person name="Davidson R.M."/>
            <person name="Lin H."/>
            <person name="Quesada-Ocampo L."/>
            <person name="Vaillancourt B."/>
            <person name="Sakai H."/>
            <person name="Lee S.S."/>
            <person name="Kim J."/>
            <person name="Numa H."/>
            <person name="Itoh T."/>
            <person name="Buell C.R."/>
            <person name="Matsumoto T."/>
        </authorList>
    </citation>
    <scope>GENOME REANNOTATION</scope>
    <source>
        <strain>cv. Nipponbare</strain>
    </source>
</reference>
<reference key="4">
    <citation type="journal article" date="2005" name="PLoS Biol.">
        <title>The genomes of Oryza sativa: a history of duplications.</title>
        <authorList>
            <person name="Yu J."/>
            <person name="Wang J."/>
            <person name="Lin W."/>
            <person name="Li S."/>
            <person name="Li H."/>
            <person name="Zhou J."/>
            <person name="Ni P."/>
            <person name="Dong W."/>
            <person name="Hu S."/>
            <person name="Zeng C."/>
            <person name="Zhang J."/>
            <person name="Zhang Y."/>
            <person name="Li R."/>
            <person name="Xu Z."/>
            <person name="Li S."/>
            <person name="Li X."/>
            <person name="Zheng H."/>
            <person name="Cong L."/>
            <person name="Lin L."/>
            <person name="Yin J."/>
            <person name="Geng J."/>
            <person name="Li G."/>
            <person name="Shi J."/>
            <person name="Liu J."/>
            <person name="Lv H."/>
            <person name="Li J."/>
            <person name="Wang J."/>
            <person name="Deng Y."/>
            <person name="Ran L."/>
            <person name="Shi X."/>
            <person name="Wang X."/>
            <person name="Wu Q."/>
            <person name="Li C."/>
            <person name="Ren X."/>
            <person name="Wang J."/>
            <person name="Wang X."/>
            <person name="Li D."/>
            <person name="Liu D."/>
            <person name="Zhang X."/>
            <person name="Ji Z."/>
            <person name="Zhao W."/>
            <person name="Sun Y."/>
            <person name="Zhang Z."/>
            <person name="Bao J."/>
            <person name="Han Y."/>
            <person name="Dong L."/>
            <person name="Ji J."/>
            <person name="Chen P."/>
            <person name="Wu S."/>
            <person name="Liu J."/>
            <person name="Xiao Y."/>
            <person name="Bu D."/>
            <person name="Tan J."/>
            <person name="Yang L."/>
            <person name="Ye C."/>
            <person name="Zhang J."/>
            <person name="Xu J."/>
            <person name="Zhou Y."/>
            <person name="Yu Y."/>
            <person name="Zhang B."/>
            <person name="Zhuang S."/>
            <person name="Wei H."/>
            <person name="Liu B."/>
            <person name="Lei M."/>
            <person name="Yu H."/>
            <person name="Li Y."/>
            <person name="Xu H."/>
            <person name="Wei S."/>
            <person name="He X."/>
            <person name="Fang L."/>
            <person name="Zhang Z."/>
            <person name="Zhang Y."/>
            <person name="Huang X."/>
            <person name="Su Z."/>
            <person name="Tong W."/>
            <person name="Li J."/>
            <person name="Tong Z."/>
            <person name="Li S."/>
            <person name="Ye J."/>
            <person name="Wang L."/>
            <person name="Fang L."/>
            <person name="Lei T."/>
            <person name="Chen C.-S."/>
            <person name="Chen H.-C."/>
            <person name="Xu Z."/>
            <person name="Li H."/>
            <person name="Huang H."/>
            <person name="Zhang F."/>
            <person name="Xu H."/>
            <person name="Li N."/>
            <person name="Zhao C."/>
            <person name="Li S."/>
            <person name="Dong L."/>
            <person name="Huang Y."/>
            <person name="Li L."/>
            <person name="Xi Y."/>
            <person name="Qi Q."/>
            <person name="Li W."/>
            <person name="Zhang B."/>
            <person name="Hu W."/>
            <person name="Zhang Y."/>
            <person name="Tian X."/>
            <person name="Jiao Y."/>
            <person name="Liang X."/>
            <person name="Jin J."/>
            <person name="Gao L."/>
            <person name="Zheng W."/>
            <person name="Hao B."/>
            <person name="Liu S.-M."/>
            <person name="Wang W."/>
            <person name="Yuan L."/>
            <person name="Cao M."/>
            <person name="McDermott J."/>
            <person name="Samudrala R."/>
            <person name="Wang J."/>
            <person name="Wong G.K.-S."/>
            <person name="Yang H."/>
        </authorList>
    </citation>
    <scope>NUCLEOTIDE SEQUENCE [LARGE SCALE GENOMIC DNA]</scope>
    <source>
        <strain>cv. Nipponbare</strain>
    </source>
</reference>
<reference key="5">
    <citation type="journal article" date="2003" name="Science">
        <title>Collection, mapping, and annotation of over 28,000 cDNA clones from japonica rice.</title>
        <authorList>
            <consortium name="The rice full-length cDNA consortium"/>
        </authorList>
    </citation>
    <scope>NUCLEOTIDE SEQUENCE [LARGE SCALE MRNA]</scope>
    <source>
        <strain>cv. Nipponbare</strain>
    </source>
</reference>
<reference key="6">
    <citation type="journal article" date="2006" name="Funct. Integr. Genomics">
        <title>Structure and expression analysis of early auxin-responsive Aux/IAA gene family in rice (Oryza sativa).</title>
        <authorList>
            <person name="Jain M."/>
            <person name="Kaur N."/>
            <person name="Garg R."/>
            <person name="Thakur J.K."/>
            <person name="Tyagi A.K."/>
            <person name="Khurana J.P."/>
        </authorList>
    </citation>
    <scope>TISSUE SPECIFICITY</scope>
    <scope>INDUCTION</scope>
    <scope>NOMENCLATURE</scope>
</reference>
<sequence>MASYGDDGVELTELTLGPPGASARRARRGRKNGHPPPSSSMIQAAYFVKVSMDGTPYLRKVDVAAYGDYLELVEALNDMFYCSTIGLMDGYGEWEHAVVYEDGDGDWMLVGDVPWEMFVSSCKRMRVMRACEARGLSSNA</sequence>
<evidence type="ECO:0000250" key="1"/>
<evidence type="ECO:0000255" key="2">
    <source>
        <dbReference type="PROSITE-ProRule" id="PRU01081"/>
    </source>
</evidence>
<evidence type="ECO:0000256" key="3">
    <source>
        <dbReference type="SAM" id="MobiDB-lite"/>
    </source>
</evidence>
<evidence type="ECO:0000269" key="4">
    <source>
    </source>
</evidence>
<evidence type="ECO:0000305" key="5"/>
<evidence type="ECO:0000312" key="6">
    <source>
        <dbReference type="EMBL" id="EEE70087.1"/>
    </source>
</evidence>
<feature type="chain" id="PRO_0000223225" description="Auxin-responsive protein IAA26">
    <location>
        <begin position="1"/>
        <end position="140"/>
    </location>
</feature>
<feature type="domain" description="PB1" evidence="2">
    <location>
        <begin position="45"/>
        <end position="130"/>
    </location>
</feature>
<feature type="region of interest" description="Disordered" evidence="3">
    <location>
        <begin position="1"/>
        <end position="40"/>
    </location>
</feature>
<feature type="short sequence motif" description="EAR-like (transcriptional repression)" evidence="1">
    <location>
        <begin position="14"/>
        <end position="18"/>
    </location>
</feature>
<feature type="compositionally biased region" description="Basic residues" evidence="3">
    <location>
        <begin position="24"/>
        <end position="33"/>
    </location>
</feature>
<feature type="sequence conflict" description="In Ref. 5; AK111128." evidence="5" ref="5">
    <original>A</original>
    <variation>V</variation>
    <location>
        <position position="140"/>
    </location>
</feature>
<dbReference type="EMBL" id="AP005681">
    <property type="protein sequence ID" value="BAD46366.1"/>
    <property type="molecule type" value="Genomic_DNA"/>
</dbReference>
<dbReference type="EMBL" id="AP008215">
    <property type="protein sequence ID" value="BAF25646.1"/>
    <property type="molecule type" value="Genomic_DNA"/>
</dbReference>
<dbReference type="EMBL" id="AP014965">
    <property type="protein sequence ID" value="BAT09065.1"/>
    <property type="molecule type" value="Genomic_DNA"/>
</dbReference>
<dbReference type="EMBL" id="CM000146">
    <property type="protein sequence ID" value="EEE70087.1"/>
    <property type="molecule type" value="Genomic_DNA"/>
</dbReference>
<dbReference type="EMBL" id="AK111128">
    <property type="status" value="NOT_ANNOTATED_CDS"/>
    <property type="molecule type" value="mRNA"/>
</dbReference>
<dbReference type="RefSeq" id="XP_015611430.1">
    <property type="nucleotide sequence ID" value="XM_015755944.1"/>
</dbReference>
<dbReference type="SMR" id="Q652A1"/>
<dbReference type="FunCoup" id="Q652A1">
    <property type="interactions" value="16"/>
</dbReference>
<dbReference type="STRING" id="39947.Q652A1"/>
<dbReference type="PaxDb" id="39947-Q652A1"/>
<dbReference type="EnsemblPlants" id="Os09t0527700-01">
    <property type="protein sequence ID" value="Os09t0527700-01"/>
    <property type="gene ID" value="Os09g0527700"/>
</dbReference>
<dbReference type="Gramene" id="Os09t0527700-01">
    <property type="protein sequence ID" value="Os09t0527700-01"/>
    <property type="gene ID" value="Os09g0527700"/>
</dbReference>
<dbReference type="KEGG" id="dosa:Os09g0527700"/>
<dbReference type="eggNOG" id="ENOG502QU81">
    <property type="taxonomic scope" value="Eukaryota"/>
</dbReference>
<dbReference type="HOGENOM" id="CLU_049393_5_0_1"/>
<dbReference type="InParanoid" id="Q652A1"/>
<dbReference type="OMA" id="SAMMQAF"/>
<dbReference type="OrthoDB" id="1926344at2759"/>
<dbReference type="Proteomes" id="UP000000763">
    <property type="component" value="Chromosome 9"/>
</dbReference>
<dbReference type="Proteomes" id="UP000007752">
    <property type="component" value="Chromosome 9"/>
</dbReference>
<dbReference type="Proteomes" id="UP000059680">
    <property type="component" value="Chromosome 9"/>
</dbReference>
<dbReference type="GO" id="GO:0005634">
    <property type="term" value="C:nucleus"/>
    <property type="evidence" value="ECO:0007669"/>
    <property type="project" value="UniProtKB-SubCell"/>
</dbReference>
<dbReference type="GO" id="GO:0009734">
    <property type="term" value="P:auxin-activated signaling pathway"/>
    <property type="evidence" value="ECO:0007669"/>
    <property type="project" value="UniProtKB-KW"/>
</dbReference>
<dbReference type="GO" id="GO:0006355">
    <property type="term" value="P:regulation of DNA-templated transcription"/>
    <property type="evidence" value="ECO:0007669"/>
    <property type="project" value="InterPro"/>
</dbReference>
<dbReference type="GO" id="GO:0009733">
    <property type="term" value="P:response to auxin"/>
    <property type="evidence" value="ECO:0000305"/>
    <property type="project" value="Gramene"/>
</dbReference>
<dbReference type="Gene3D" id="3.10.20.90">
    <property type="entry name" value="Phosphatidylinositol 3-kinase Catalytic Subunit, Chain A, domain 1"/>
    <property type="match status" value="1"/>
</dbReference>
<dbReference type="InterPro" id="IPR033389">
    <property type="entry name" value="AUX/IAA_dom"/>
</dbReference>
<dbReference type="InterPro" id="IPR003311">
    <property type="entry name" value="AUX_IAA"/>
</dbReference>
<dbReference type="InterPro" id="IPR053793">
    <property type="entry name" value="PB1-like"/>
</dbReference>
<dbReference type="PANTHER" id="PTHR31734">
    <property type="entry name" value="AUXIN-RESPONSIVE PROTEIN IAA17"/>
    <property type="match status" value="1"/>
</dbReference>
<dbReference type="PANTHER" id="PTHR31734:SF250">
    <property type="entry name" value="AUXIN-RESPONSIVE PROTEIN IAA26"/>
    <property type="match status" value="1"/>
</dbReference>
<dbReference type="Pfam" id="PF02309">
    <property type="entry name" value="AUX_IAA"/>
    <property type="match status" value="1"/>
</dbReference>
<dbReference type="SUPFAM" id="SSF54277">
    <property type="entry name" value="CAD &amp; PB1 domains"/>
    <property type="match status" value="1"/>
</dbReference>
<dbReference type="PROSITE" id="PS51745">
    <property type="entry name" value="PB1"/>
    <property type="match status" value="1"/>
</dbReference>
<proteinExistence type="evidence at transcript level"/>
<organism>
    <name type="scientific">Oryza sativa subsp. japonica</name>
    <name type="common">Rice</name>
    <dbReference type="NCBI Taxonomy" id="39947"/>
    <lineage>
        <taxon>Eukaryota</taxon>
        <taxon>Viridiplantae</taxon>
        <taxon>Streptophyta</taxon>
        <taxon>Embryophyta</taxon>
        <taxon>Tracheophyta</taxon>
        <taxon>Spermatophyta</taxon>
        <taxon>Magnoliopsida</taxon>
        <taxon>Liliopsida</taxon>
        <taxon>Poales</taxon>
        <taxon>Poaceae</taxon>
        <taxon>BOP clade</taxon>
        <taxon>Oryzoideae</taxon>
        <taxon>Oryzeae</taxon>
        <taxon>Oryzinae</taxon>
        <taxon>Oryza</taxon>
        <taxon>Oryza sativa</taxon>
    </lineage>
</organism>